<feature type="chain" id="PRO_1000070338" description="Ribonuclease Z">
    <location>
        <begin position="1"/>
        <end position="309"/>
    </location>
</feature>
<feature type="active site" description="Proton acceptor" evidence="1">
    <location>
        <position position="67"/>
    </location>
</feature>
<feature type="binding site" evidence="1">
    <location>
        <position position="63"/>
    </location>
    <ligand>
        <name>Zn(2+)</name>
        <dbReference type="ChEBI" id="CHEBI:29105"/>
        <label>1</label>
        <note>catalytic</note>
    </ligand>
</feature>
<feature type="binding site" evidence="1">
    <location>
        <position position="65"/>
    </location>
    <ligand>
        <name>Zn(2+)</name>
        <dbReference type="ChEBI" id="CHEBI:29105"/>
        <label>1</label>
        <note>catalytic</note>
    </ligand>
</feature>
<feature type="binding site" evidence="1">
    <location>
        <position position="67"/>
    </location>
    <ligand>
        <name>Zn(2+)</name>
        <dbReference type="ChEBI" id="CHEBI:29105"/>
        <label>2</label>
        <note>catalytic</note>
    </ligand>
</feature>
<feature type="binding site" evidence="1">
    <location>
        <position position="68"/>
    </location>
    <ligand>
        <name>Zn(2+)</name>
        <dbReference type="ChEBI" id="CHEBI:29105"/>
        <label>2</label>
        <note>catalytic</note>
    </ligand>
</feature>
<feature type="binding site" evidence="1">
    <location>
        <position position="145"/>
    </location>
    <ligand>
        <name>Zn(2+)</name>
        <dbReference type="ChEBI" id="CHEBI:29105"/>
        <label>1</label>
        <note>catalytic</note>
    </ligand>
</feature>
<feature type="binding site" evidence="1">
    <location>
        <position position="216"/>
    </location>
    <ligand>
        <name>Zn(2+)</name>
        <dbReference type="ChEBI" id="CHEBI:29105"/>
        <label>1</label>
        <note>catalytic</note>
    </ligand>
</feature>
<feature type="binding site" evidence="1">
    <location>
        <position position="216"/>
    </location>
    <ligand>
        <name>Zn(2+)</name>
        <dbReference type="ChEBI" id="CHEBI:29105"/>
        <label>2</label>
        <note>catalytic</note>
    </ligand>
</feature>
<feature type="binding site" evidence="1">
    <location>
        <position position="274"/>
    </location>
    <ligand>
        <name>Zn(2+)</name>
        <dbReference type="ChEBI" id="CHEBI:29105"/>
        <label>2</label>
        <note>catalytic</note>
    </ligand>
</feature>
<comment type="function">
    <text evidence="1">Zinc phosphodiesterase, which displays some tRNA 3'-processing endonuclease activity. Probably involved in tRNA maturation, by removing a 3'-trailer from precursor tRNA.</text>
</comment>
<comment type="catalytic activity">
    <reaction evidence="1">
        <text>Endonucleolytic cleavage of RNA, removing extra 3' nucleotides from tRNA precursor, generating 3' termini of tRNAs. A 3'-hydroxy group is left at the tRNA terminus and a 5'-phosphoryl group is left at the trailer molecule.</text>
        <dbReference type="EC" id="3.1.26.11"/>
    </reaction>
</comment>
<comment type="cofactor">
    <cofactor evidence="1">
        <name>Zn(2+)</name>
        <dbReference type="ChEBI" id="CHEBI:29105"/>
    </cofactor>
    <text evidence="1">Binds 2 Zn(2+) ions.</text>
</comment>
<comment type="subunit">
    <text evidence="1">Homodimer.</text>
</comment>
<comment type="similarity">
    <text evidence="1">Belongs to the RNase Z family.</text>
</comment>
<name>RNZ_STRPF</name>
<evidence type="ECO:0000255" key="1">
    <source>
        <dbReference type="HAMAP-Rule" id="MF_01818"/>
    </source>
</evidence>
<protein>
    <recommendedName>
        <fullName evidence="1">Ribonuclease Z</fullName>
        <shortName evidence="1">RNase Z</shortName>
        <ecNumber evidence="1">3.1.26.11</ecNumber>
    </recommendedName>
    <alternativeName>
        <fullName evidence="1">tRNA 3 endonuclease</fullName>
    </alternativeName>
    <alternativeName>
        <fullName evidence="1">tRNase Z</fullName>
    </alternativeName>
</protein>
<proteinExistence type="inferred from homology"/>
<sequence length="309" mass="34400">MELQFLGTGAGQPAKQRNVSSLALKLLDEINEVWMFDCGEGTQRQILETTIKPRKIRKIFITHLHGDHIFGLPGFLSSRSFQASEEQTDLDIYGPIGIKTYVLTSLKVSGARVPYQIHFHEFDDKSLGKIMETDKFVVYAERLAHTIFCMGYRVVQKDLEGTLDAEALKAAGVPFGPLFGKIKNGQDVELEDGRLICAKDYISAPKKGKIITIIGDTRKTSASVKLAKDADVLVHESTYGKGDERIARNHGHSTNMQAAQIAHEAGAKRLLLNHVSARFLGRDCRQMEKDAATIFENVKMVQDLEEVII</sequence>
<organism>
    <name type="scientific">Streptococcus pyogenes serotype M4 (strain MGAS10750)</name>
    <dbReference type="NCBI Taxonomy" id="370554"/>
    <lineage>
        <taxon>Bacteria</taxon>
        <taxon>Bacillati</taxon>
        <taxon>Bacillota</taxon>
        <taxon>Bacilli</taxon>
        <taxon>Lactobacillales</taxon>
        <taxon>Streptococcaceae</taxon>
        <taxon>Streptococcus</taxon>
    </lineage>
</organism>
<accession>Q1J705</accession>
<keyword id="KW-0255">Endonuclease</keyword>
<keyword id="KW-0378">Hydrolase</keyword>
<keyword id="KW-0479">Metal-binding</keyword>
<keyword id="KW-0540">Nuclease</keyword>
<keyword id="KW-0819">tRNA processing</keyword>
<keyword id="KW-0862">Zinc</keyword>
<reference key="1">
    <citation type="journal article" date="2006" name="Proc. Natl. Acad. Sci. U.S.A.">
        <title>Molecular genetic anatomy of inter- and intraserotype variation in the human bacterial pathogen group A Streptococcus.</title>
        <authorList>
            <person name="Beres S.B."/>
            <person name="Richter E.W."/>
            <person name="Nagiec M.J."/>
            <person name="Sumby P."/>
            <person name="Porcella S.F."/>
            <person name="DeLeo F.R."/>
            <person name="Musser J.M."/>
        </authorList>
    </citation>
    <scope>NUCLEOTIDE SEQUENCE [LARGE SCALE GENOMIC DNA]</scope>
    <source>
        <strain>MGAS10750</strain>
    </source>
</reference>
<gene>
    <name evidence="1" type="primary">rnz</name>
    <name type="ordered locus">MGAS10750_Spy0819</name>
</gene>
<dbReference type="EC" id="3.1.26.11" evidence="1"/>
<dbReference type="EMBL" id="CP000262">
    <property type="protein sequence ID" value="ABF37769.1"/>
    <property type="molecule type" value="Genomic_DNA"/>
</dbReference>
<dbReference type="SMR" id="Q1J705"/>
<dbReference type="KEGG" id="spi:MGAS10750_Spy0819"/>
<dbReference type="HOGENOM" id="CLU_031317_2_0_9"/>
<dbReference type="Proteomes" id="UP000002434">
    <property type="component" value="Chromosome"/>
</dbReference>
<dbReference type="GO" id="GO:0042781">
    <property type="term" value="F:3'-tRNA processing endoribonuclease activity"/>
    <property type="evidence" value="ECO:0007669"/>
    <property type="project" value="UniProtKB-UniRule"/>
</dbReference>
<dbReference type="GO" id="GO:0008270">
    <property type="term" value="F:zinc ion binding"/>
    <property type="evidence" value="ECO:0007669"/>
    <property type="project" value="UniProtKB-UniRule"/>
</dbReference>
<dbReference type="CDD" id="cd07717">
    <property type="entry name" value="RNaseZ_ZiPD-like_MBL-fold"/>
    <property type="match status" value="1"/>
</dbReference>
<dbReference type="FunFam" id="3.60.15.10:FF:000002">
    <property type="entry name" value="Ribonuclease Z"/>
    <property type="match status" value="1"/>
</dbReference>
<dbReference type="Gene3D" id="3.60.15.10">
    <property type="entry name" value="Ribonuclease Z/Hydroxyacylglutathione hydrolase-like"/>
    <property type="match status" value="1"/>
</dbReference>
<dbReference type="HAMAP" id="MF_01818">
    <property type="entry name" value="RNase_Z_BN"/>
    <property type="match status" value="1"/>
</dbReference>
<dbReference type="InterPro" id="IPR001279">
    <property type="entry name" value="Metallo-B-lactamas"/>
</dbReference>
<dbReference type="InterPro" id="IPR036866">
    <property type="entry name" value="RibonucZ/Hydroxyglut_hydro"/>
</dbReference>
<dbReference type="InterPro" id="IPR013471">
    <property type="entry name" value="RNase_Z/BN"/>
</dbReference>
<dbReference type="NCBIfam" id="NF000801">
    <property type="entry name" value="PRK00055.1-3"/>
    <property type="match status" value="1"/>
</dbReference>
<dbReference type="NCBIfam" id="TIGR02651">
    <property type="entry name" value="RNase_Z"/>
    <property type="match status" value="1"/>
</dbReference>
<dbReference type="PANTHER" id="PTHR46018">
    <property type="entry name" value="ZINC PHOSPHODIESTERASE ELAC PROTEIN 1"/>
    <property type="match status" value="1"/>
</dbReference>
<dbReference type="PANTHER" id="PTHR46018:SF2">
    <property type="entry name" value="ZINC PHOSPHODIESTERASE ELAC PROTEIN 1"/>
    <property type="match status" value="1"/>
</dbReference>
<dbReference type="Pfam" id="PF00753">
    <property type="entry name" value="Lactamase_B"/>
    <property type="match status" value="1"/>
</dbReference>
<dbReference type="SUPFAM" id="SSF56281">
    <property type="entry name" value="Metallo-hydrolase/oxidoreductase"/>
    <property type="match status" value="1"/>
</dbReference>